<gene>
    <name type="ordered locus">BCQ_3737</name>
</gene>
<accession>B9IW28</accession>
<evidence type="ECO:0000255" key="1">
    <source>
        <dbReference type="HAMAP-Rule" id="MF_01560"/>
    </source>
</evidence>
<proteinExistence type="inferred from homology"/>
<dbReference type="EMBL" id="CP000227">
    <property type="protein sequence ID" value="ACM14165.1"/>
    <property type="molecule type" value="Genomic_DNA"/>
</dbReference>
<dbReference type="SMR" id="B9IW28"/>
<dbReference type="KEGG" id="bcq:BCQ_3737"/>
<dbReference type="HOGENOM" id="CLU_160493_1_0_9"/>
<dbReference type="Proteomes" id="UP000000441">
    <property type="component" value="Chromosome"/>
</dbReference>
<dbReference type="Gene3D" id="1.10.287.750">
    <property type="entry name" value="SO2669-like"/>
    <property type="match status" value="1"/>
</dbReference>
<dbReference type="HAMAP" id="MF_01560">
    <property type="entry name" value="UPF0358"/>
    <property type="match status" value="1"/>
</dbReference>
<dbReference type="InterPro" id="IPR009983">
    <property type="entry name" value="UPF0358"/>
</dbReference>
<dbReference type="InterPro" id="IPR036270">
    <property type="entry name" value="UPF0358_sf"/>
</dbReference>
<dbReference type="NCBIfam" id="NF010187">
    <property type="entry name" value="PRK13666.1"/>
    <property type="match status" value="1"/>
</dbReference>
<dbReference type="Pfam" id="PF07408">
    <property type="entry name" value="DUF1507"/>
    <property type="match status" value="1"/>
</dbReference>
<dbReference type="SUPFAM" id="SSF140404">
    <property type="entry name" value="EF2458-like"/>
    <property type="match status" value="1"/>
</dbReference>
<reference key="1">
    <citation type="journal article" date="2009" name="J. Bacteriol.">
        <title>Complete genome sequence of the extremophilic Bacillus cereus strain Q1 with industrial applications.</title>
        <authorList>
            <person name="Xiong Z."/>
            <person name="Jiang Y."/>
            <person name="Qi D."/>
            <person name="Lu H."/>
            <person name="Yang F."/>
            <person name="Yang J."/>
            <person name="Chen L."/>
            <person name="Sun L."/>
            <person name="Xu X."/>
            <person name="Xue Y."/>
            <person name="Zhu Y."/>
            <person name="Jin Q."/>
        </authorList>
    </citation>
    <scope>NUCLEOTIDE SEQUENCE [LARGE SCALE GENOMIC DNA]</scope>
    <source>
        <strain>Q1</strain>
    </source>
</reference>
<feature type="chain" id="PRO_1000185425" description="UPF0358 protein BCQ_3737">
    <location>
        <begin position="1"/>
        <end position="95"/>
    </location>
</feature>
<comment type="similarity">
    <text evidence="1">Belongs to the UPF0358 family.</text>
</comment>
<organism>
    <name type="scientific">Bacillus cereus (strain Q1)</name>
    <dbReference type="NCBI Taxonomy" id="361100"/>
    <lineage>
        <taxon>Bacteria</taxon>
        <taxon>Bacillati</taxon>
        <taxon>Bacillota</taxon>
        <taxon>Bacilli</taxon>
        <taxon>Bacillales</taxon>
        <taxon>Bacillaceae</taxon>
        <taxon>Bacillus</taxon>
        <taxon>Bacillus cereus group</taxon>
    </lineage>
</organism>
<sequence length="95" mass="10740">MASETVSNHQEKALALLQADAEKILRLIKVQMDHLTMPQCPLYEEVLDTQMFGLSREVDFAVRLGLIAEEQGKAMLGELERELSALHEAFTNKQQ</sequence>
<protein>
    <recommendedName>
        <fullName evidence="1">UPF0358 protein BCQ_3737</fullName>
    </recommendedName>
</protein>
<name>Y3737_BACCQ</name>